<evidence type="ECO:0000255" key="1">
    <source>
        <dbReference type="HAMAP-Rule" id="MF_00113"/>
    </source>
</evidence>
<keyword id="KW-0963">Cytoplasm</keyword>
<keyword id="KW-0671">Queuosine biosynthesis</keyword>
<keyword id="KW-0949">S-adenosyl-L-methionine</keyword>
<keyword id="KW-0808">Transferase</keyword>
<sequence length="350" mass="39387">MDINLFDFHLPEELIAQVPLEERETSRLMVLDRETGDIEHKHFTDILSYLHEGDCLVLNETKVMPARLHGVKEDTGAHIEVLLLKQEEGDKWETLVKPAKRVKEGTVISFGEGKLKATCTGTADQGGRQLEFSYDGIFYEILDELGEMPLPPYIKETLEDRDRYQTVYAKEIGSAAAPTAGLHFTEELLEKLKQKGVELAFITLHVGLGTFRPVSADTIEEHHMHAEYYHMSEETAALLNRVKENGGRIITVGTTSTRTLETIATDHDGKLCAASGWTDIFMYPGYEFKAIDGLITNFHLPKSTLIMLVSAFANRDNVLHAYNEAVKEKYRFFSFGDAMFVASHAKMGNK</sequence>
<reference key="1">
    <citation type="journal article" date="2006" name="J. Bacteriol.">
        <title>Pathogenomic sequence analysis of Bacillus cereus and Bacillus thuringiensis isolates closely related to Bacillus anthracis.</title>
        <authorList>
            <person name="Han C.S."/>
            <person name="Xie G."/>
            <person name="Challacombe J.F."/>
            <person name="Altherr M.R."/>
            <person name="Bhotika S.S."/>
            <person name="Bruce D."/>
            <person name="Campbell C.S."/>
            <person name="Campbell M.L."/>
            <person name="Chen J."/>
            <person name="Chertkov O."/>
            <person name="Cleland C."/>
            <person name="Dimitrijevic M."/>
            <person name="Doggett N.A."/>
            <person name="Fawcett J.J."/>
            <person name="Glavina T."/>
            <person name="Goodwin L.A."/>
            <person name="Hill K.K."/>
            <person name="Hitchcock P."/>
            <person name="Jackson P.J."/>
            <person name="Keim P."/>
            <person name="Kewalramani A.R."/>
            <person name="Longmire J."/>
            <person name="Lucas S."/>
            <person name="Malfatti S."/>
            <person name="McMurry K."/>
            <person name="Meincke L.J."/>
            <person name="Misra M."/>
            <person name="Moseman B.L."/>
            <person name="Mundt M."/>
            <person name="Munk A.C."/>
            <person name="Okinaka R.T."/>
            <person name="Parson-Quintana B."/>
            <person name="Reilly L.P."/>
            <person name="Richardson P."/>
            <person name="Robinson D.L."/>
            <person name="Rubin E."/>
            <person name="Saunders E."/>
            <person name="Tapia R."/>
            <person name="Tesmer J.G."/>
            <person name="Thayer N."/>
            <person name="Thompson L.S."/>
            <person name="Tice H."/>
            <person name="Ticknor L.O."/>
            <person name="Wills P.L."/>
            <person name="Brettin T.S."/>
            <person name="Gilna P."/>
        </authorList>
    </citation>
    <scope>NUCLEOTIDE SEQUENCE [LARGE SCALE GENOMIC DNA]</scope>
    <source>
        <strain>97-27</strain>
    </source>
</reference>
<proteinExistence type="inferred from homology"/>
<feature type="chain" id="PRO_0000231317" description="S-adenosylmethionine:tRNA ribosyltransferase-isomerase">
    <location>
        <begin position="1"/>
        <end position="350"/>
    </location>
</feature>
<name>QUEA_BACHK</name>
<gene>
    <name evidence="1" type="primary">queA</name>
    <name type="ordered locus">BT9727_4151</name>
</gene>
<accession>Q6HDA8</accession>
<protein>
    <recommendedName>
        <fullName evidence="1">S-adenosylmethionine:tRNA ribosyltransferase-isomerase</fullName>
        <ecNumber evidence="1">2.4.99.17</ecNumber>
    </recommendedName>
    <alternativeName>
        <fullName evidence="1">Queuosine biosynthesis protein QueA</fullName>
    </alternativeName>
</protein>
<organism>
    <name type="scientific">Bacillus thuringiensis subsp. konkukian (strain 97-27)</name>
    <dbReference type="NCBI Taxonomy" id="281309"/>
    <lineage>
        <taxon>Bacteria</taxon>
        <taxon>Bacillati</taxon>
        <taxon>Bacillota</taxon>
        <taxon>Bacilli</taxon>
        <taxon>Bacillales</taxon>
        <taxon>Bacillaceae</taxon>
        <taxon>Bacillus</taxon>
        <taxon>Bacillus cereus group</taxon>
    </lineage>
</organism>
<dbReference type="EC" id="2.4.99.17" evidence="1"/>
<dbReference type="EMBL" id="AE017355">
    <property type="protein sequence ID" value="AAT63706.1"/>
    <property type="molecule type" value="Genomic_DNA"/>
</dbReference>
<dbReference type="RefSeq" id="WP_000354028.1">
    <property type="nucleotide sequence ID" value="NC_005957.1"/>
</dbReference>
<dbReference type="RefSeq" id="YP_038468.1">
    <property type="nucleotide sequence ID" value="NC_005957.1"/>
</dbReference>
<dbReference type="SMR" id="Q6HDA8"/>
<dbReference type="GeneID" id="93006683"/>
<dbReference type="KEGG" id="btk:BT9727_4151"/>
<dbReference type="PATRIC" id="fig|281309.8.peg.4429"/>
<dbReference type="HOGENOM" id="CLU_039110_1_0_9"/>
<dbReference type="UniPathway" id="UPA00392"/>
<dbReference type="Proteomes" id="UP000001301">
    <property type="component" value="Chromosome"/>
</dbReference>
<dbReference type="GO" id="GO:0005737">
    <property type="term" value="C:cytoplasm"/>
    <property type="evidence" value="ECO:0007669"/>
    <property type="project" value="UniProtKB-SubCell"/>
</dbReference>
<dbReference type="GO" id="GO:0051075">
    <property type="term" value="F:S-adenosylmethionine:tRNA ribosyltransferase-isomerase activity"/>
    <property type="evidence" value="ECO:0007669"/>
    <property type="project" value="UniProtKB-EC"/>
</dbReference>
<dbReference type="GO" id="GO:0008616">
    <property type="term" value="P:queuosine biosynthetic process"/>
    <property type="evidence" value="ECO:0007669"/>
    <property type="project" value="UniProtKB-UniRule"/>
</dbReference>
<dbReference type="GO" id="GO:0002099">
    <property type="term" value="P:tRNA wobble guanine modification"/>
    <property type="evidence" value="ECO:0007669"/>
    <property type="project" value="TreeGrafter"/>
</dbReference>
<dbReference type="FunFam" id="2.40.10.240:FF:000002">
    <property type="entry name" value="S-adenosylmethionine:tRNA ribosyltransferase-isomerase"/>
    <property type="match status" value="1"/>
</dbReference>
<dbReference type="FunFam" id="3.40.1780.10:FF:000001">
    <property type="entry name" value="S-adenosylmethionine:tRNA ribosyltransferase-isomerase"/>
    <property type="match status" value="1"/>
</dbReference>
<dbReference type="Gene3D" id="2.40.10.240">
    <property type="entry name" value="QueA-like"/>
    <property type="match status" value="1"/>
</dbReference>
<dbReference type="Gene3D" id="3.40.1780.10">
    <property type="entry name" value="QueA-like"/>
    <property type="match status" value="1"/>
</dbReference>
<dbReference type="HAMAP" id="MF_00113">
    <property type="entry name" value="QueA"/>
    <property type="match status" value="1"/>
</dbReference>
<dbReference type="InterPro" id="IPR003699">
    <property type="entry name" value="QueA"/>
</dbReference>
<dbReference type="InterPro" id="IPR042118">
    <property type="entry name" value="QueA_dom1"/>
</dbReference>
<dbReference type="InterPro" id="IPR042119">
    <property type="entry name" value="QueA_dom2"/>
</dbReference>
<dbReference type="InterPro" id="IPR036100">
    <property type="entry name" value="QueA_sf"/>
</dbReference>
<dbReference type="NCBIfam" id="NF001140">
    <property type="entry name" value="PRK00147.1"/>
    <property type="match status" value="1"/>
</dbReference>
<dbReference type="NCBIfam" id="TIGR00113">
    <property type="entry name" value="queA"/>
    <property type="match status" value="1"/>
</dbReference>
<dbReference type="PANTHER" id="PTHR30307">
    <property type="entry name" value="S-ADENOSYLMETHIONINE:TRNA RIBOSYLTRANSFERASE-ISOMERASE"/>
    <property type="match status" value="1"/>
</dbReference>
<dbReference type="PANTHER" id="PTHR30307:SF0">
    <property type="entry name" value="S-ADENOSYLMETHIONINE:TRNA RIBOSYLTRANSFERASE-ISOMERASE"/>
    <property type="match status" value="1"/>
</dbReference>
<dbReference type="Pfam" id="PF02547">
    <property type="entry name" value="Queuosine_synth"/>
    <property type="match status" value="1"/>
</dbReference>
<dbReference type="SUPFAM" id="SSF111337">
    <property type="entry name" value="QueA-like"/>
    <property type="match status" value="1"/>
</dbReference>
<comment type="function">
    <text evidence="1">Transfers and isomerizes the ribose moiety from AdoMet to the 7-aminomethyl group of 7-deazaguanine (preQ1-tRNA) to give epoxyqueuosine (oQ-tRNA).</text>
</comment>
<comment type="catalytic activity">
    <reaction evidence="1">
        <text>7-aminomethyl-7-carbaguanosine(34) in tRNA + S-adenosyl-L-methionine = epoxyqueuosine(34) in tRNA + adenine + L-methionine + 2 H(+)</text>
        <dbReference type="Rhea" id="RHEA:32155"/>
        <dbReference type="Rhea" id="RHEA-COMP:10342"/>
        <dbReference type="Rhea" id="RHEA-COMP:18582"/>
        <dbReference type="ChEBI" id="CHEBI:15378"/>
        <dbReference type="ChEBI" id="CHEBI:16708"/>
        <dbReference type="ChEBI" id="CHEBI:57844"/>
        <dbReference type="ChEBI" id="CHEBI:59789"/>
        <dbReference type="ChEBI" id="CHEBI:82833"/>
        <dbReference type="ChEBI" id="CHEBI:194443"/>
        <dbReference type="EC" id="2.4.99.17"/>
    </reaction>
</comment>
<comment type="pathway">
    <text evidence="1">tRNA modification; tRNA-queuosine biosynthesis.</text>
</comment>
<comment type="subunit">
    <text evidence="1">Monomer.</text>
</comment>
<comment type="subcellular location">
    <subcellularLocation>
        <location evidence="1">Cytoplasm</location>
    </subcellularLocation>
</comment>
<comment type="similarity">
    <text evidence="1">Belongs to the QueA family.</text>
</comment>